<evidence type="ECO:0000255" key="1">
    <source>
        <dbReference type="HAMAP-Rule" id="MF_00051"/>
    </source>
</evidence>
<comment type="function">
    <text evidence="1">Catalyzes the reversible interconversion of serine and glycine with tetrahydrofolate (THF) serving as the one-carbon carrier. This reaction serves as the major source of one-carbon groups required for the biosynthesis of purines, thymidylate, methionine, and other important biomolecules. Also exhibits THF-independent aldolase activity toward beta-hydroxyamino acids, producing glycine and aldehydes, via a retro-aldol mechanism.</text>
</comment>
<comment type="catalytic activity">
    <reaction evidence="1">
        <text>(6R)-5,10-methylene-5,6,7,8-tetrahydrofolate + glycine + H2O = (6S)-5,6,7,8-tetrahydrofolate + L-serine</text>
        <dbReference type="Rhea" id="RHEA:15481"/>
        <dbReference type="ChEBI" id="CHEBI:15377"/>
        <dbReference type="ChEBI" id="CHEBI:15636"/>
        <dbReference type="ChEBI" id="CHEBI:33384"/>
        <dbReference type="ChEBI" id="CHEBI:57305"/>
        <dbReference type="ChEBI" id="CHEBI:57453"/>
        <dbReference type="EC" id="2.1.2.1"/>
    </reaction>
</comment>
<comment type="cofactor">
    <cofactor evidence="1">
        <name>pyridoxal 5'-phosphate</name>
        <dbReference type="ChEBI" id="CHEBI:597326"/>
    </cofactor>
</comment>
<comment type="pathway">
    <text evidence="1">One-carbon metabolism; tetrahydrofolate interconversion.</text>
</comment>
<comment type="pathway">
    <text evidence="1">Amino-acid biosynthesis; glycine biosynthesis; glycine from L-serine: step 1/1.</text>
</comment>
<comment type="subunit">
    <text evidence="1">Homodimer.</text>
</comment>
<comment type="subcellular location">
    <subcellularLocation>
        <location evidence="1">Cytoplasm</location>
    </subcellularLocation>
</comment>
<comment type="similarity">
    <text evidence="1">Belongs to the SHMT family.</text>
</comment>
<protein>
    <recommendedName>
        <fullName evidence="1">Serine hydroxymethyltransferase</fullName>
        <shortName evidence="1">SHMT</shortName>
        <shortName evidence="1">Serine methylase</shortName>
        <ecNumber evidence="1">2.1.2.1</ecNumber>
    </recommendedName>
</protein>
<sequence length="415" mass="45262">MYSNLQKTDKAVFDAVEKELGRQRTKLELIASENFTSLSVMEAQGSILTNKYAEGYPGKRYYGGCEFVDMVETLAIERAKQIFGAEHANVQPHSGAQANMAAYLALINPGDTVLGLNLSHGGHLTHGHPMNFSGKYFKIVPMNVRKEDEQIDYEEAAKLALEHKPKVIMAGASNYSRIFDWKKLREIADSVDAYLICDVAHYAGLIAAGVYSNPVPYADIVTTTTHKTLRGPRGGLILCKEKHAKAVNSSVFPGQQGGPLMHVIAAKAVCFGEALKPEFKEYQTQVVKNAKELSTQLQKLGYRIVSGGTDCHVLCVDLTSKSMTGKAAEEALDKAGITTNKNTIPYDTQKPFITSGVRLGTPAVTTRGMKEAEMAAIASFIDNVLNNADNEAKLAEISKEVTAFLGKFLLYTELN</sequence>
<reference key="1">
    <citation type="journal article" date="2009" name="Appl. Environ. Microbiol.">
        <title>Genomic analysis of 'Elusimicrobium minutum,' the first cultivated representative of the phylum 'Elusimicrobia' (formerly termite group 1).</title>
        <authorList>
            <person name="Herlemann D.P.R."/>
            <person name="Geissinger O."/>
            <person name="Ikeda-Ohtsubo W."/>
            <person name="Kunin V."/>
            <person name="Sun H."/>
            <person name="Lapidus A."/>
            <person name="Hugenholtz P."/>
            <person name="Brune A."/>
        </authorList>
    </citation>
    <scope>NUCLEOTIDE SEQUENCE [LARGE SCALE GENOMIC DNA]</scope>
    <source>
        <strain>Pei191</strain>
    </source>
</reference>
<feature type="chain" id="PRO_1000116833" description="Serine hydroxymethyltransferase">
    <location>
        <begin position="1"/>
        <end position="415"/>
    </location>
</feature>
<feature type="binding site" evidence="1">
    <location>
        <position position="118"/>
    </location>
    <ligand>
        <name>(6S)-5,6,7,8-tetrahydrofolate</name>
        <dbReference type="ChEBI" id="CHEBI:57453"/>
    </ligand>
</feature>
<feature type="binding site" evidence="1">
    <location>
        <begin position="122"/>
        <end position="124"/>
    </location>
    <ligand>
        <name>(6S)-5,6,7,8-tetrahydrofolate</name>
        <dbReference type="ChEBI" id="CHEBI:57453"/>
    </ligand>
</feature>
<feature type="site" description="Plays an important role in substrate specificity" evidence="1">
    <location>
        <position position="226"/>
    </location>
</feature>
<feature type="modified residue" description="N6-(pyridoxal phosphate)lysine" evidence="1">
    <location>
        <position position="227"/>
    </location>
</feature>
<keyword id="KW-0028">Amino-acid biosynthesis</keyword>
<keyword id="KW-0963">Cytoplasm</keyword>
<keyword id="KW-0554">One-carbon metabolism</keyword>
<keyword id="KW-0663">Pyridoxal phosphate</keyword>
<keyword id="KW-1185">Reference proteome</keyword>
<keyword id="KW-0808">Transferase</keyword>
<organism>
    <name type="scientific">Elusimicrobium minutum (strain Pei191)</name>
    <dbReference type="NCBI Taxonomy" id="445932"/>
    <lineage>
        <taxon>Bacteria</taxon>
        <taxon>Pseudomonadati</taxon>
        <taxon>Elusimicrobiota</taxon>
        <taxon>Elusimicrobia</taxon>
        <taxon>Elusimicrobiales</taxon>
        <taxon>Elusimicrobiaceae</taxon>
        <taxon>Elusimicrobium</taxon>
    </lineage>
</organism>
<dbReference type="EC" id="2.1.2.1" evidence="1"/>
<dbReference type="EMBL" id="CP001055">
    <property type="protein sequence ID" value="ACC99011.1"/>
    <property type="molecule type" value="Genomic_DNA"/>
</dbReference>
<dbReference type="RefSeq" id="WP_012415626.1">
    <property type="nucleotide sequence ID" value="NC_010644.1"/>
</dbReference>
<dbReference type="SMR" id="B2KER5"/>
<dbReference type="STRING" id="445932.Emin_1463"/>
<dbReference type="KEGG" id="emi:Emin_1463"/>
<dbReference type="HOGENOM" id="CLU_022477_2_1_0"/>
<dbReference type="OrthoDB" id="9803846at2"/>
<dbReference type="UniPathway" id="UPA00193"/>
<dbReference type="UniPathway" id="UPA00288">
    <property type="reaction ID" value="UER01023"/>
</dbReference>
<dbReference type="Proteomes" id="UP000001029">
    <property type="component" value="Chromosome"/>
</dbReference>
<dbReference type="GO" id="GO:0005829">
    <property type="term" value="C:cytosol"/>
    <property type="evidence" value="ECO:0007669"/>
    <property type="project" value="TreeGrafter"/>
</dbReference>
<dbReference type="GO" id="GO:0004372">
    <property type="term" value="F:glycine hydroxymethyltransferase activity"/>
    <property type="evidence" value="ECO:0007669"/>
    <property type="project" value="UniProtKB-UniRule"/>
</dbReference>
<dbReference type="GO" id="GO:0030170">
    <property type="term" value="F:pyridoxal phosphate binding"/>
    <property type="evidence" value="ECO:0007669"/>
    <property type="project" value="UniProtKB-UniRule"/>
</dbReference>
<dbReference type="GO" id="GO:0019264">
    <property type="term" value="P:glycine biosynthetic process from serine"/>
    <property type="evidence" value="ECO:0007669"/>
    <property type="project" value="UniProtKB-UniRule"/>
</dbReference>
<dbReference type="GO" id="GO:0035999">
    <property type="term" value="P:tetrahydrofolate interconversion"/>
    <property type="evidence" value="ECO:0007669"/>
    <property type="project" value="UniProtKB-UniRule"/>
</dbReference>
<dbReference type="CDD" id="cd00378">
    <property type="entry name" value="SHMT"/>
    <property type="match status" value="1"/>
</dbReference>
<dbReference type="FunFam" id="3.40.640.10:FF:000001">
    <property type="entry name" value="Serine hydroxymethyltransferase"/>
    <property type="match status" value="1"/>
</dbReference>
<dbReference type="FunFam" id="3.90.1150.10:FF:000003">
    <property type="entry name" value="Serine hydroxymethyltransferase"/>
    <property type="match status" value="1"/>
</dbReference>
<dbReference type="Gene3D" id="3.90.1150.10">
    <property type="entry name" value="Aspartate Aminotransferase, domain 1"/>
    <property type="match status" value="1"/>
</dbReference>
<dbReference type="Gene3D" id="3.40.640.10">
    <property type="entry name" value="Type I PLP-dependent aspartate aminotransferase-like (Major domain)"/>
    <property type="match status" value="1"/>
</dbReference>
<dbReference type="HAMAP" id="MF_00051">
    <property type="entry name" value="SHMT"/>
    <property type="match status" value="1"/>
</dbReference>
<dbReference type="InterPro" id="IPR015424">
    <property type="entry name" value="PyrdxlP-dep_Trfase"/>
</dbReference>
<dbReference type="InterPro" id="IPR015421">
    <property type="entry name" value="PyrdxlP-dep_Trfase_major"/>
</dbReference>
<dbReference type="InterPro" id="IPR015422">
    <property type="entry name" value="PyrdxlP-dep_Trfase_small"/>
</dbReference>
<dbReference type="InterPro" id="IPR001085">
    <property type="entry name" value="Ser_HO-MeTrfase"/>
</dbReference>
<dbReference type="InterPro" id="IPR049943">
    <property type="entry name" value="Ser_HO-MeTrfase-like"/>
</dbReference>
<dbReference type="InterPro" id="IPR019798">
    <property type="entry name" value="Ser_HO-MeTrfase_PLP_BS"/>
</dbReference>
<dbReference type="InterPro" id="IPR039429">
    <property type="entry name" value="SHMT-like_dom"/>
</dbReference>
<dbReference type="NCBIfam" id="NF000586">
    <property type="entry name" value="PRK00011.1"/>
    <property type="match status" value="1"/>
</dbReference>
<dbReference type="PANTHER" id="PTHR11680">
    <property type="entry name" value="SERINE HYDROXYMETHYLTRANSFERASE"/>
    <property type="match status" value="1"/>
</dbReference>
<dbReference type="PANTHER" id="PTHR11680:SF35">
    <property type="entry name" value="SERINE HYDROXYMETHYLTRANSFERASE 1"/>
    <property type="match status" value="1"/>
</dbReference>
<dbReference type="Pfam" id="PF00464">
    <property type="entry name" value="SHMT"/>
    <property type="match status" value="1"/>
</dbReference>
<dbReference type="PIRSF" id="PIRSF000412">
    <property type="entry name" value="SHMT"/>
    <property type="match status" value="1"/>
</dbReference>
<dbReference type="SUPFAM" id="SSF53383">
    <property type="entry name" value="PLP-dependent transferases"/>
    <property type="match status" value="1"/>
</dbReference>
<dbReference type="PROSITE" id="PS00096">
    <property type="entry name" value="SHMT"/>
    <property type="match status" value="1"/>
</dbReference>
<proteinExistence type="inferred from homology"/>
<accession>B2KER5</accession>
<gene>
    <name evidence="1" type="primary">glyA</name>
    <name type="ordered locus">Emin_1463</name>
</gene>
<name>GLYA_ELUMP</name>